<dbReference type="EMBL" id="CP001120">
    <property type="protein sequence ID" value="ACF66789.1"/>
    <property type="molecule type" value="Genomic_DNA"/>
</dbReference>
<dbReference type="RefSeq" id="WP_000109274.1">
    <property type="nucleotide sequence ID" value="NC_011083.1"/>
</dbReference>
<dbReference type="SMR" id="B4TD28"/>
<dbReference type="KEGG" id="seh:SeHA_C1066"/>
<dbReference type="HOGENOM" id="CLU_035018_1_2_6"/>
<dbReference type="Proteomes" id="UP000001866">
    <property type="component" value="Chromosome"/>
</dbReference>
<dbReference type="GO" id="GO:0005886">
    <property type="term" value="C:plasma membrane"/>
    <property type="evidence" value="ECO:0007669"/>
    <property type="project" value="UniProtKB-SubCell"/>
</dbReference>
<dbReference type="GO" id="GO:0022857">
    <property type="term" value="F:transmembrane transporter activity"/>
    <property type="evidence" value="ECO:0007669"/>
    <property type="project" value="UniProtKB-UniRule"/>
</dbReference>
<dbReference type="CDD" id="cd17477">
    <property type="entry name" value="MFS_YcaD_like"/>
    <property type="match status" value="1"/>
</dbReference>
<dbReference type="FunFam" id="1.20.1250.20:FF:000041">
    <property type="entry name" value="Uncharacterized MFS-type transporter YcaD"/>
    <property type="match status" value="1"/>
</dbReference>
<dbReference type="FunFam" id="1.20.1250.20:FF:000066">
    <property type="entry name" value="Uncharacterized MFS-type transporter YcaD"/>
    <property type="match status" value="1"/>
</dbReference>
<dbReference type="Gene3D" id="1.20.1250.20">
    <property type="entry name" value="MFS general substrate transporter like domains"/>
    <property type="match status" value="2"/>
</dbReference>
<dbReference type="HAMAP" id="MF_01149">
    <property type="entry name" value="MFS_YcaD"/>
    <property type="match status" value="1"/>
</dbReference>
<dbReference type="InterPro" id="IPR011701">
    <property type="entry name" value="MFS"/>
</dbReference>
<dbReference type="InterPro" id="IPR020846">
    <property type="entry name" value="MFS_dom"/>
</dbReference>
<dbReference type="InterPro" id="IPR036259">
    <property type="entry name" value="MFS_trans_sf"/>
</dbReference>
<dbReference type="InterPro" id="IPR023745">
    <property type="entry name" value="MFS_YcaD"/>
</dbReference>
<dbReference type="InterPro" id="IPR047200">
    <property type="entry name" value="MFS_YcaD-like"/>
</dbReference>
<dbReference type="NCBIfam" id="NF002962">
    <property type="entry name" value="PRK03633.1"/>
    <property type="match status" value="1"/>
</dbReference>
<dbReference type="PANTHER" id="PTHR23521">
    <property type="entry name" value="TRANSPORTER MFS SUPERFAMILY"/>
    <property type="match status" value="1"/>
</dbReference>
<dbReference type="PANTHER" id="PTHR23521:SF2">
    <property type="entry name" value="TRANSPORTER MFS SUPERFAMILY"/>
    <property type="match status" value="1"/>
</dbReference>
<dbReference type="Pfam" id="PF07690">
    <property type="entry name" value="MFS_1"/>
    <property type="match status" value="1"/>
</dbReference>
<dbReference type="SUPFAM" id="SSF103473">
    <property type="entry name" value="MFS general substrate transporter"/>
    <property type="match status" value="1"/>
</dbReference>
<dbReference type="PROSITE" id="PS50850">
    <property type="entry name" value="MFS"/>
    <property type="match status" value="1"/>
</dbReference>
<evidence type="ECO:0000255" key="1">
    <source>
        <dbReference type="HAMAP-Rule" id="MF_01149"/>
    </source>
</evidence>
<feature type="chain" id="PRO_1000137496" description="Uncharacterized MFS-type transporter YcaD">
    <location>
        <begin position="1"/>
        <end position="382"/>
    </location>
</feature>
<feature type="transmembrane region" description="Helical" evidence="1">
    <location>
        <begin position="8"/>
        <end position="28"/>
    </location>
</feature>
<feature type="transmembrane region" description="Helical" evidence="1">
    <location>
        <begin position="45"/>
        <end position="65"/>
    </location>
</feature>
<feature type="transmembrane region" description="Helical" evidence="1">
    <location>
        <begin position="75"/>
        <end position="95"/>
    </location>
</feature>
<feature type="transmembrane region" description="Helical" evidence="1">
    <location>
        <begin position="102"/>
        <end position="122"/>
    </location>
</feature>
<feature type="transmembrane region" description="Helical" evidence="1">
    <location>
        <begin position="131"/>
        <end position="151"/>
    </location>
</feature>
<feature type="transmembrane region" description="Helical" evidence="1">
    <location>
        <begin position="157"/>
        <end position="177"/>
    </location>
</feature>
<feature type="transmembrane region" description="Helical" evidence="1">
    <location>
        <begin position="204"/>
        <end position="224"/>
    </location>
</feature>
<feature type="transmembrane region" description="Helical" evidence="1">
    <location>
        <begin position="231"/>
        <end position="251"/>
    </location>
</feature>
<feature type="transmembrane region" description="Helical" evidence="1">
    <location>
        <begin position="270"/>
        <end position="290"/>
    </location>
</feature>
<feature type="transmembrane region" description="Helical" evidence="1">
    <location>
        <begin position="291"/>
        <end position="311"/>
    </location>
</feature>
<feature type="transmembrane region" description="Helical" evidence="1">
    <location>
        <begin position="325"/>
        <end position="345"/>
    </location>
</feature>
<feature type="transmembrane region" description="Helical" evidence="1">
    <location>
        <begin position="349"/>
        <end position="369"/>
    </location>
</feature>
<proteinExistence type="inferred from homology"/>
<accession>B4TD28</accession>
<keyword id="KW-0997">Cell inner membrane</keyword>
<keyword id="KW-1003">Cell membrane</keyword>
<keyword id="KW-0472">Membrane</keyword>
<keyword id="KW-0812">Transmembrane</keyword>
<keyword id="KW-1133">Transmembrane helix</keyword>
<keyword id="KW-0813">Transport</keyword>
<sequence>MSTYTRPVMLLLCGLLLLTLAIAVLNTLVPLWLAQANLPTWQVGMVSSSYFTGNLVGTLFTGYLIKRIGFNRSYYLASLIFAAGCVGLGVMVGFWSWMSWRFIAGIGCAMIWVVVESALMCSGTSHNRGRLLAAYMMVYYMGTFLGQLLVSKVSGELLHVLPWVTGMILAGILPLLFTRIVNQQTQTRHSSSISAMLKLRQARLGVNGCIISGIVLGSLYGLMPLYLKHQGMANASIGFWMAVLVSAGILGQWPMGRLADKFGRLLVLRVQVFVVILGSIAMLTQAAMAPALFILGAAGFTLYPVAMAWACEKVEHHQLVAMNQALLLSYTVGSLLGPSFAAMLMQNYSDNLLFIMIASVSFIYLLMLLRNAGQTPNPVAHI</sequence>
<organism>
    <name type="scientific">Salmonella heidelberg (strain SL476)</name>
    <dbReference type="NCBI Taxonomy" id="454169"/>
    <lineage>
        <taxon>Bacteria</taxon>
        <taxon>Pseudomonadati</taxon>
        <taxon>Pseudomonadota</taxon>
        <taxon>Gammaproteobacteria</taxon>
        <taxon>Enterobacterales</taxon>
        <taxon>Enterobacteriaceae</taxon>
        <taxon>Salmonella</taxon>
    </lineage>
</organism>
<reference key="1">
    <citation type="journal article" date="2011" name="J. Bacteriol.">
        <title>Comparative genomics of 28 Salmonella enterica isolates: evidence for CRISPR-mediated adaptive sublineage evolution.</title>
        <authorList>
            <person name="Fricke W.F."/>
            <person name="Mammel M.K."/>
            <person name="McDermott P.F."/>
            <person name="Tartera C."/>
            <person name="White D.G."/>
            <person name="Leclerc J.E."/>
            <person name="Ravel J."/>
            <person name="Cebula T.A."/>
        </authorList>
    </citation>
    <scope>NUCLEOTIDE SEQUENCE [LARGE SCALE GENOMIC DNA]</scope>
    <source>
        <strain>SL476</strain>
    </source>
</reference>
<gene>
    <name evidence="1" type="primary">ycaD</name>
    <name type="ordered locus">SeHA_C1066</name>
</gene>
<comment type="subcellular location">
    <subcellularLocation>
        <location evidence="1">Cell inner membrane</location>
        <topology evidence="1">Multi-pass membrane protein</topology>
    </subcellularLocation>
</comment>
<comment type="similarity">
    <text evidence="1">Belongs to the major facilitator superfamily. YcaD (TC 2.A.1.26) family.</text>
</comment>
<protein>
    <recommendedName>
        <fullName evidence="1">Uncharacterized MFS-type transporter YcaD</fullName>
    </recommendedName>
</protein>
<name>YCAD_SALHS</name>